<feature type="chain" id="PRO_0000318323" description="Protein translocase subunit SecA 2">
    <location>
        <begin position="1"/>
        <end position="787"/>
    </location>
</feature>
<feature type="binding site" evidence="1">
    <location>
        <position position="86"/>
    </location>
    <ligand>
        <name>ATP</name>
        <dbReference type="ChEBI" id="CHEBI:30616"/>
    </ligand>
</feature>
<feature type="binding site" evidence="1">
    <location>
        <begin position="104"/>
        <end position="108"/>
    </location>
    <ligand>
        <name>ATP</name>
        <dbReference type="ChEBI" id="CHEBI:30616"/>
    </ligand>
</feature>
<feature type="binding site" evidence="1">
    <location>
        <position position="493"/>
    </location>
    <ligand>
        <name>ATP</name>
        <dbReference type="ChEBI" id="CHEBI:30616"/>
    </ligand>
</feature>
<dbReference type="EC" id="7.4.2.8" evidence="1"/>
<dbReference type="EMBL" id="AE017355">
    <property type="protein sequence ID" value="AAT59157.1"/>
    <property type="molecule type" value="Genomic_DNA"/>
</dbReference>
<dbReference type="RefSeq" id="WP_000935165.1">
    <property type="nucleotide sequence ID" value="NC_005957.1"/>
</dbReference>
<dbReference type="RefSeq" id="YP_035128.1">
    <property type="nucleotide sequence ID" value="NC_005957.1"/>
</dbReference>
<dbReference type="SMR" id="Q6HMU3"/>
<dbReference type="KEGG" id="btk:BT9727_0784"/>
<dbReference type="PATRIC" id="fig|281309.8.peg.820"/>
<dbReference type="HOGENOM" id="CLU_005314_3_0_9"/>
<dbReference type="Proteomes" id="UP000001301">
    <property type="component" value="Chromosome"/>
</dbReference>
<dbReference type="GO" id="GO:0031522">
    <property type="term" value="C:cell envelope Sec protein transport complex"/>
    <property type="evidence" value="ECO:0007669"/>
    <property type="project" value="TreeGrafter"/>
</dbReference>
<dbReference type="GO" id="GO:0005829">
    <property type="term" value="C:cytosol"/>
    <property type="evidence" value="ECO:0007669"/>
    <property type="project" value="TreeGrafter"/>
</dbReference>
<dbReference type="GO" id="GO:0005886">
    <property type="term" value="C:plasma membrane"/>
    <property type="evidence" value="ECO:0007669"/>
    <property type="project" value="UniProtKB-SubCell"/>
</dbReference>
<dbReference type="GO" id="GO:0005524">
    <property type="term" value="F:ATP binding"/>
    <property type="evidence" value="ECO:0007669"/>
    <property type="project" value="UniProtKB-UniRule"/>
</dbReference>
<dbReference type="GO" id="GO:0008564">
    <property type="term" value="F:protein-exporting ATPase activity"/>
    <property type="evidence" value="ECO:0007669"/>
    <property type="project" value="UniProtKB-EC"/>
</dbReference>
<dbReference type="GO" id="GO:0065002">
    <property type="term" value="P:intracellular protein transmembrane transport"/>
    <property type="evidence" value="ECO:0007669"/>
    <property type="project" value="UniProtKB-UniRule"/>
</dbReference>
<dbReference type="GO" id="GO:0017038">
    <property type="term" value="P:protein import"/>
    <property type="evidence" value="ECO:0007669"/>
    <property type="project" value="InterPro"/>
</dbReference>
<dbReference type="GO" id="GO:0006605">
    <property type="term" value="P:protein targeting"/>
    <property type="evidence" value="ECO:0007669"/>
    <property type="project" value="UniProtKB-UniRule"/>
</dbReference>
<dbReference type="GO" id="GO:0043952">
    <property type="term" value="P:protein transport by the Sec complex"/>
    <property type="evidence" value="ECO:0007669"/>
    <property type="project" value="TreeGrafter"/>
</dbReference>
<dbReference type="CDD" id="cd17928">
    <property type="entry name" value="DEXDc_SecA"/>
    <property type="match status" value="1"/>
</dbReference>
<dbReference type="CDD" id="cd18803">
    <property type="entry name" value="SF2_C_secA"/>
    <property type="match status" value="1"/>
</dbReference>
<dbReference type="FunFam" id="3.40.50.300:FF:000429">
    <property type="entry name" value="Preprotein translocase subunit SecA"/>
    <property type="match status" value="1"/>
</dbReference>
<dbReference type="Gene3D" id="1.10.3060.10">
    <property type="entry name" value="Helical scaffold and wing domains of SecA"/>
    <property type="match status" value="1"/>
</dbReference>
<dbReference type="Gene3D" id="3.40.50.300">
    <property type="entry name" value="P-loop containing nucleotide triphosphate hydrolases"/>
    <property type="match status" value="3"/>
</dbReference>
<dbReference type="Gene3D" id="3.90.1440.10">
    <property type="entry name" value="SecA, preprotein cross-linking domain"/>
    <property type="match status" value="1"/>
</dbReference>
<dbReference type="HAMAP" id="MF_01382">
    <property type="entry name" value="SecA"/>
    <property type="match status" value="1"/>
</dbReference>
<dbReference type="InterPro" id="IPR014001">
    <property type="entry name" value="Helicase_ATP-bd"/>
</dbReference>
<dbReference type="InterPro" id="IPR001650">
    <property type="entry name" value="Helicase_C-like"/>
</dbReference>
<dbReference type="InterPro" id="IPR027417">
    <property type="entry name" value="P-loop_NTPase"/>
</dbReference>
<dbReference type="InterPro" id="IPR000185">
    <property type="entry name" value="SecA"/>
</dbReference>
<dbReference type="InterPro" id="IPR030908">
    <property type="entry name" value="SecA2_Bac_anthr"/>
</dbReference>
<dbReference type="InterPro" id="IPR020937">
    <property type="entry name" value="SecA_CS"/>
</dbReference>
<dbReference type="InterPro" id="IPR011115">
    <property type="entry name" value="SecA_DEAD"/>
</dbReference>
<dbReference type="InterPro" id="IPR014018">
    <property type="entry name" value="SecA_motor_DEAD"/>
</dbReference>
<dbReference type="InterPro" id="IPR011130">
    <property type="entry name" value="SecA_preprotein_X-link_dom"/>
</dbReference>
<dbReference type="InterPro" id="IPR044722">
    <property type="entry name" value="SecA_SF2_C"/>
</dbReference>
<dbReference type="InterPro" id="IPR011116">
    <property type="entry name" value="SecA_Wing/Scaffold"/>
</dbReference>
<dbReference type="InterPro" id="IPR036266">
    <property type="entry name" value="SecA_Wing/Scaffold_sf"/>
</dbReference>
<dbReference type="InterPro" id="IPR036670">
    <property type="entry name" value="SecA_X-link_sf"/>
</dbReference>
<dbReference type="NCBIfam" id="NF006630">
    <property type="entry name" value="PRK09200.1"/>
    <property type="match status" value="1"/>
</dbReference>
<dbReference type="NCBIfam" id="TIGR00963">
    <property type="entry name" value="secA"/>
    <property type="match status" value="1"/>
</dbReference>
<dbReference type="NCBIfam" id="TIGR04397">
    <property type="entry name" value="SecA2_Bac_anthr"/>
    <property type="match status" value="1"/>
</dbReference>
<dbReference type="PANTHER" id="PTHR30612:SF0">
    <property type="entry name" value="CHLOROPLAST PROTEIN-TRANSPORTING ATPASE"/>
    <property type="match status" value="1"/>
</dbReference>
<dbReference type="PANTHER" id="PTHR30612">
    <property type="entry name" value="SECA INNER MEMBRANE COMPONENT OF SEC PROTEIN SECRETION SYSTEM"/>
    <property type="match status" value="1"/>
</dbReference>
<dbReference type="Pfam" id="PF21090">
    <property type="entry name" value="P-loop_SecA"/>
    <property type="match status" value="2"/>
</dbReference>
<dbReference type="Pfam" id="PF07517">
    <property type="entry name" value="SecA_DEAD"/>
    <property type="match status" value="1"/>
</dbReference>
<dbReference type="Pfam" id="PF01043">
    <property type="entry name" value="SecA_PP_bind"/>
    <property type="match status" value="1"/>
</dbReference>
<dbReference type="Pfam" id="PF07516">
    <property type="entry name" value="SecA_SW"/>
    <property type="match status" value="1"/>
</dbReference>
<dbReference type="PRINTS" id="PR00906">
    <property type="entry name" value="SECA"/>
</dbReference>
<dbReference type="SMART" id="SM00957">
    <property type="entry name" value="SecA_DEAD"/>
    <property type="match status" value="1"/>
</dbReference>
<dbReference type="SMART" id="SM00958">
    <property type="entry name" value="SecA_PP_bind"/>
    <property type="match status" value="1"/>
</dbReference>
<dbReference type="SUPFAM" id="SSF81886">
    <property type="entry name" value="Helical scaffold and wing domains of SecA"/>
    <property type="match status" value="1"/>
</dbReference>
<dbReference type="SUPFAM" id="SSF52540">
    <property type="entry name" value="P-loop containing nucleoside triphosphate hydrolases"/>
    <property type="match status" value="2"/>
</dbReference>
<dbReference type="SUPFAM" id="SSF81767">
    <property type="entry name" value="Pre-protein crosslinking domain of SecA"/>
    <property type="match status" value="1"/>
</dbReference>
<dbReference type="PROSITE" id="PS01312">
    <property type="entry name" value="SECA"/>
    <property type="match status" value="1"/>
</dbReference>
<dbReference type="PROSITE" id="PS51196">
    <property type="entry name" value="SECA_MOTOR_DEAD"/>
    <property type="match status" value="1"/>
</dbReference>
<keyword id="KW-0067">ATP-binding</keyword>
<keyword id="KW-1003">Cell membrane</keyword>
<keyword id="KW-0963">Cytoplasm</keyword>
<keyword id="KW-0472">Membrane</keyword>
<keyword id="KW-0547">Nucleotide-binding</keyword>
<keyword id="KW-0653">Protein transport</keyword>
<keyword id="KW-1278">Translocase</keyword>
<keyword id="KW-0811">Translocation</keyword>
<keyword id="KW-0813">Transport</keyword>
<protein>
    <recommendedName>
        <fullName evidence="1">Protein translocase subunit SecA 2</fullName>
        <ecNumber evidence="1">7.4.2.8</ecNumber>
    </recommendedName>
</protein>
<accession>Q6HMU3</accession>
<proteinExistence type="inferred from homology"/>
<name>SECA2_BACHK</name>
<gene>
    <name evidence="1" type="primary">secA2</name>
    <name type="ordered locus">BT9727_0784</name>
</gene>
<reference key="1">
    <citation type="journal article" date="2006" name="J. Bacteriol.">
        <title>Pathogenomic sequence analysis of Bacillus cereus and Bacillus thuringiensis isolates closely related to Bacillus anthracis.</title>
        <authorList>
            <person name="Han C.S."/>
            <person name="Xie G."/>
            <person name="Challacombe J.F."/>
            <person name="Altherr M.R."/>
            <person name="Bhotika S.S."/>
            <person name="Bruce D."/>
            <person name="Campbell C.S."/>
            <person name="Campbell M.L."/>
            <person name="Chen J."/>
            <person name="Chertkov O."/>
            <person name="Cleland C."/>
            <person name="Dimitrijevic M."/>
            <person name="Doggett N.A."/>
            <person name="Fawcett J.J."/>
            <person name="Glavina T."/>
            <person name="Goodwin L.A."/>
            <person name="Hill K.K."/>
            <person name="Hitchcock P."/>
            <person name="Jackson P.J."/>
            <person name="Keim P."/>
            <person name="Kewalramani A.R."/>
            <person name="Longmire J."/>
            <person name="Lucas S."/>
            <person name="Malfatti S."/>
            <person name="McMurry K."/>
            <person name="Meincke L.J."/>
            <person name="Misra M."/>
            <person name="Moseman B.L."/>
            <person name="Mundt M."/>
            <person name="Munk A.C."/>
            <person name="Okinaka R.T."/>
            <person name="Parson-Quintana B."/>
            <person name="Reilly L.P."/>
            <person name="Richardson P."/>
            <person name="Robinson D.L."/>
            <person name="Rubin E."/>
            <person name="Saunders E."/>
            <person name="Tapia R."/>
            <person name="Tesmer J.G."/>
            <person name="Thayer N."/>
            <person name="Thompson L.S."/>
            <person name="Tice H."/>
            <person name="Ticknor L.O."/>
            <person name="Wills P.L."/>
            <person name="Brettin T.S."/>
            <person name="Gilna P."/>
        </authorList>
    </citation>
    <scope>NUCLEOTIDE SEQUENCE [LARGE SCALE GENOMIC DNA]</scope>
    <source>
        <strain>97-27</strain>
    </source>
</reference>
<sequence length="787" mass="89428">MLNSVKKLLGDSQKRKIKNYEQIVNDINQLESVMETLSDDELRQKTVAFQHMLQNGKTVEDIKVEAFAVVREAAKRVLGLRHYDVQLIGGLVLLEGNIAEMPTGEGKTLVSSLPTYVRALEKKGVHVITVNDYLAKRDKELIGRVHEFLGLTVGLNMSQMESIDKKRAYEADITYGIGTEFGFDYLRDNMASSKAEQVQRPFHFAIIDEIDSVLIDEAKTPLIIAGKKSSSSDFHHLCAKVMKTFQDTLHYTYDAETKACNFTEDGITKIEDLFDIDNLYDLEHQTLYHYMIQALRAHVAFQLDVDYIIEDEKIMLVDIFTGRIMDGRSLSDGLHQALEAKEGLPITDENQTQASITIQNFFRMYPALSGMTGTAKTEEKEFNRVYNMEVISIPTNRPILREDKKDVVYITADAKYKAVCAEVMNIHKKERPILIGTMSILQSETVARYLDEANLPYQLLNAKSAEQEADLIALAGKKGKITIATNMAGRGTDILLEKGVHELGGLHVIGTERHESRRVDNQLKGRAGRQGDPGSSQFFLSLEDEMIQRYAGEDVEKLKKSLKIDENGLILNNKIYDLINRTQLICEGSHFSMREYNLKLDDVINDQRNVVYKLRNNLLNEEVNMIEIVIPMIKNTLTVIAKDHLLEGMLPEEWDFTRLVEDLKAVLSTEEIPALSANNVHSAEDLQELLKDTLTSYIERVNALESDADAQQVLRQISLHFLDSGWTSHLSAMQHLKEGIGLRQYQQEDPARLYQKEGFEIFLHTFSHFEKEVALYLARYITVPQNI</sequence>
<organism>
    <name type="scientific">Bacillus thuringiensis subsp. konkukian (strain 97-27)</name>
    <dbReference type="NCBI Taxonomy" id="281309"/>
    <lineage>
        <taxon>Bacteria</taxon>
        <taxon>Bacillati</taxon>
        <taxon>Bacillota</taxon>
        <taxon>Bacilli</taxon>
        <taxon>Bacillales</taxon>
        <taxon>Bacillaceae</taxon>
        <taxon>Bacillus</taxon>
        <taxon>Bacillus cereus group</taxon>
    </lineage>
</organism>
<evidence type="ECO:0000255" key="1">
    <source>
        <dbReference type="HAMAP-Rule" id="MF_01382"/>
    </source>
</evidence>
<comment type="function">
    <text evidence="1">Part of the Sec protein translocase complex. Interacts with the SecYEG preprotein conducting channel. Has a central role in coupling the hydrolysis of ATP to the transfer of proteins into and across the cell membrane, serving as an ATP-driven molecular motor driving the stepwise translocation of polypeptide chains across the membrane.</text>
</comment>
<comment type="catalytic activity">
    <reaction evidence="1">
        <text>ATP + H2O + cellular proteinSide 1 = ADP + phosphate + cellular proteinSide 2.</text>
        <dbReference type="EC" id="7.4.2.8"/>
    </reaction>
</comment>
<comment type="subunit">
    <text evidence="1">Monomer and homodimer. Part of the essential Sec protein translocation apparatus which comprises SecA, SecYEG and auxiliary proteins SecDF. Other proteins may also be involved.</text>
</comment>
<comment type="subcellular location">
    <subcellularLocation>
        <location evidence="1">Cell membrane</location>
        <topology evidence="1">Peripheral membrane protein</topology>
        <orientation evidence="1">Cytoplasmic side</orientation>
    </subcellularLocation>
    <subcellularLocation>
        <location evidence="1">Cytoplasm</location>
    </subcellularLocation>
    <text evidence="1">Distribution is 50-50.</text>
</comment>
<comment type="similarity">
    <text evidence="1">Belongs to the SecA family.</text>
</comment>